<accession>A9CH39</accession>
<sequence>MSQLVLILGDQLSPSIAALDGVDKKQDTIVLCEVMAEASYVGHHKKKIAFIFSAMRHFAEELRGEGYRVRYTRIDDADNAGSFTGEVKRAIDDLTPSRICVTEPGEWRVRSEMDGFAGAFGIQVDIRSDRRFLSSHGEFRNWAAGRKSLTMEYFYREMRRKTGLLMNGEQPVGGRWNFDAENRQPARPDLLRPKHPVFAPDKITKEVIDTVERLFPDNFGKLENFGFAVTRTDAERALSAFIDDFLCNFGATQDAMLQDDPNLNHSLLSFYINCGLLDALDVCKAAERAYHEGGAPLNAVEGFIRQIIGWREYMRGIYWLAGPDYVDSNFFENDRSLPVFYWTGKTHMNCMAKVITETIENAYAHHIQRLMITGNFALLAGIDPKAVHRWYLEVYADAYEWVELPNVIGMSQFADGGFLGTKPYAASGNYINRMSDYCDTCRYDPKERLGDNACPFNALYWDFLARNREKLKSNHRLAQPYATWARMSEDVRHDLRAKAAAFLRKLD</sequence>
<proteinExistence type="evidence at protein level"/>
<gene>
    <name evidence="3" type="primary">phrB</name>
    <name evidence="7" type="ordered locus">Atu4765</name>
</gene>
<organism>
    <name type="scientific">Agrobacterium fabrum (strain C58 / ATCC 33970)</name>
    <name type="common">Agrobacterium tumefaciens (strain C58)</name>
    <dbReference type="NCBI Taxonomy" id="176299"/>
    <lineage>
        <taxon>Bacteria</taxon>
        <taxon>Pseudomonadati</taxon>
        <taxon>Pseudomonadota</taxon>
        <taxon>Alphaproteobacteria</taxon>
        <taxon>Hyphomicrobiales</taxon>
        <taxon>Rhizobiaceae</taxon>
        <taxon>Rhizobium/Agrobacterium group</taxon>
        <taxon>Agrobacterium</taxon>
        <taxon>Agrobacterium tumefaciens complex</taxon>
    </lineage>
</organism>
<dbReference type="EC" id="4.1.99.13" evidence="2"/>
<dbReference type="EMBL" id="AE007870">
    <property type="protein sequence ID" value="AAK88685.1"/>
    <property type="molecule type" value="Genomic_DNA"/>
</dbReference>
<dbReference type="PIR" id="AI3142">
    <property type="entry name" value="AI3142"/>
</dbReference>
<dbReference type="PIR" id="C98145">
    <property type="entry name" value="C98145"/>
</dbReference>
<dbReference type="RefSeq" id="NP_355900.1">
    <property type="nucleotide sequence ID" value="NC_003063.2"/>
</dbReference>
<dbReference type="RefSeq" id="WP_010974139.1">
    <property type="nucleotide sequence ID" value="NC_003063.2"/>
</dbReference>
<dbReference type="PDB" id="4DJA">
    <property type="method" value="X-ray"/>
    <property type="resolution" value="1.45 A"/>
    <property type="chains" value="A=1-507"/>
</dbReference>
<dbReference type="PDB" id="5KCM">
    <property type="method" value="X-ray"/>
    <property type="resolution" value="2.15 A"/>
    <property type="chains" value="A/B=1-507"/>
</dbReference>
<dbReference type="PDB" id="5LFA">
    <property type="method" value="X-ray"/>
    <property type="resolution" value="2.50 A"/>
    <property type="chains" value="A=1-507"/>
</dbReference>
<dbReference type="PDB" id="6DD6">
    <property type="method" value="X-ray"/>
    <property type="resolution" value="2.30 A"/>
    <property type="chains" value="A=1-507"/>
</dbReference>
<dbReference type="PDBsum" id="4DJA"/>
<dbReference type="PDBsum" id="5KCM"/>
<dbReference type="PDBsum" id="5LFA"/>
<dbReference type="PDBsum" id="6DD6"/>
<dbReference type="SMR" id="A9CH39"/>
<dbReference type="STRING" id="176299.Atu4765"/>
<dbReference type="DNASU" id="1136639"/>
<dbReference type="EnsemblBacteria" id="AAK88685">
    <property type="protein sequence ID" value="AAK88685"/>
    <property type="gene ID" value="Atu4765"/>
</dbReference>
<dbReference type="GeneID" id="1136639"/>
<dbReference type="KEGG" id="atu:Atu4765"/>
<dbReference type="PATRIC" id="fig|176299.10.peg.4572"/>
<dbReference type="eggNOG" id="COG3046">
    <property type="taxonomic scope" value="Bacteria"/>
</dbReference>
<dbReference type="HOGENOM" id="CLU_031632_1_0_5"/>
<dbReference type="OrthoDB" id="5288100at2"/>
<dbReference type="PhylomeDB" id="A9CH39"/>
<dbReference type="BioCyc" id="AGRO:ATU4765-MONOMER"/>
<dbReference type="BRENDA" id="4.1.99.13">
    <property type="organism ID" value="14964"/>
</dbReference>
<dbReference type="EvolutionaryTrace" id="A9CH39"/>
<dbReference type="Proteomes" id="UP000000813">
    <property type="component" value="Chromosome linear"/>
</dbReference>
<dbReference type="GO" id="GO:0051539">
    <property type="term" value="F:4 iron, 4 sulfur cluster binding"/>
    <property type="evidence" value="ECO:0000314"/>
    <property type="project" value="UniProtKB"/>
</dbReference>
<dbReference type="GO" id="GO:0003914">
    <property type="term" value="F:DNA (6-4) photolyase activity"/>
    <property type="evidence" value="ECO:0000314"/>
    <property type="project" value="UniProtKB"/>
</dbReference>
<dbReference type="GO" id="GO:0003677">
    <property type="term" value="F:DNA binding"/>
    <property type="evidence" value="ECO:0007669"/>
    <property type="project" value="UniProtKB-KW"/>
</dbReference>
<dbReference type="GO" id="GO:0071949">
    <property type="term" value="F:FAD binding"/>
    <property type="evidence" value="ECO:0000314"/>
    <property type="project" value="UniProtKB"/>
</dbReference>
<dbReference type="GO" id="GO:0046872">
    <property type="term" value="F:metal ion binding"/>
    <property type="evidence" value="ECO:0007669"/>
    <property type="project" value="UniProtKB-KW"/>
</dbReference>
<dbReference type="GO" id="GO:0000719">
    <property type="term" value="P:photoreactive repair"/>
    <property type="evidence" value="ECO:0000314"/>
    <property type="project" value="UniProtKB"/>
</dbReference>
<dbReference type="FunFam" id="1.10.579.10:FF:000007">
    <property type="entry name" value="(6-4) photolyase"/>
    <property type="match status" value="1"/>
</dbReference>
<dbReference type="Gene3D" id="1.25.40.80">
    <property type="match status" value="1"/>
</dbReference>
<dbReference type="Gene3D" id="1.10.10.1710">
    <property type="entry name" value="Deoxyribodipyrimidine photolyase-related"/>
    <property type="match status" value="1"/>
</dbReference>
<dbReference type="Gene3D" id="1.10.579.10">
    <property type="entry name" value="DNA Cyclobutane Dipyrimidine Photolyase, subunit A, domain 3"/>
    <property type="match status" value="1"/>
</dbReference>
<dbReference type="Gene3D" id="3.40.50.620">
    <property type="entry name" value="HUPs"/>
    <property type="match status" value="1"/>
</dbReference>
<dbReference type="InterPro" id="IPR036134">
    <property type="entry name" value="Crypto/Photolyase_FAD-like_sf"/>
</dbReference>
<dbReference type="InterPro" id="IPR007357">
    <property type="entry name" value="PhrB-like"/>
</dbReference>
<dbReference type="InterPro" id="IPR014729">
    <property type="entry name" value="Rossmann-like_a/b/a_fold"/>
</dbReference>
<dbReference type="InterPro" id="IPR052551">
    <property type="entry name" value="UV-DNA_repair_photolyase"/>
</dbReference>
<dbReference type="PANTHER" id="PTHR38657">
    <property type="entry name" value="SLR1343 PROTEIN"/>
    <property type="match status" value="1"/>
</dbReference>
<dbReference type="PANTHER" id="PTHR38657:SF1">
    <property type="entry name" value="SLR1343 PROTEIN"/>
    <property type="match status" value="1"/>
</dbReference>
<dbReference type="Pfam" id="PF04244">
    <property type="entry name" value="DPRP"/>
    <property type="match status" value="1"/>
</dbReference>
<dbReference type="SUPFAM" id="SSF48173">
    <property type="entry name" value="Cryptochrome/photolyase FAD-binding domain"/>
    <property type="match status" value="1"/>
</dbReference>
<reference key="1">
    <citation type="journal article" date="2001" name="Science">
        <title>The genome of the natural genetic engineer Agrobacterium tumefaciens C58.</title>
        <authorList>
            <person name="Wood D.W."/>
            <person name="Setubal J.C."/>
            <person name="Kaul R."/>
            <person name="Monks D.E."/>
            <person name="Kitajima J.P."/>
            <person name="Okura V.K."/>
            <person name="Zhou Y."/>
            <person name="Chen L."/>
            <person name="Wood G.E."/>
            <person name="Almeida N.F. Jr."/>
            <person name="Woo L."/>
            <person name="Chen Y."/>
            <person name="Paulsen I.T."/>
            <person name="Eisen J.A."/>
            <person name="Karp P.D."/>
            <person name="Bovee D. Sr."/>
            <person name="Chapman P."/>
            <person name="Clendenning J."/>
            <person name="Deatherage G."/>
            <person name="Gillet W."/>
            <person name="Grant C."/>
            <person name="Kutyavin T."/>
            <person name="Levy R."/>
            <person name="Li M.-J."/>
            <person name="McClelland E."/>
            <person name="Palmieri A."/>
            <person name="Raymond C."/>
            <person name="Rouse G."/>
            <person name="Saenphimmachak C."/>
            <person name="Wu Z."/>
            <person name="Romero P."/>
            <person name="Gordon D."/>
            <person name="Zhang S."/>
            <person name="Yoo H."/>
            <person name="Tao Y."/>
            <person name="Biddle P."/>
            <person name="Jung M."/>
            <person name="Krespan W."/>
            <person name="Perry M."/>
            <person name="Gordon-Kamm B."/>
            <person name="Liao L."/>
            <person name="Kim S."/>
            <person name="Hendrick C."/>
            <person name="Zhao Z.-Y."/>
            <person name="Dolan M."/>
            <person name="Chumley F."/>
            <person name="Tingey S.V."/>
            <person name="Tomb J.-F."/>
            <person name="Gordon M.P."/>
            <person name="Olson M.V."/>
            <person name="Nester E.W."/>
        </authorList>
    </citation>
    <scope>NUCLEOTIDE SEQUENCE [LARGE SCALE GENOMIC DNA]</scope>
    <source>
        <strain>C58 / ATCC 33970</strain>
    </source>
</reference>
<reference key="2">
    <citation type="journal article" date="2001" name="Science">
        <title>Genome sequence of the plant pathogen and biotechnology agent Agrobacterium tumefaciens C58.</title>
        <authorList>
            <person name="Goodner B."/>
            <person name="Hinkle G."/>
            <person name="Gattung S."/>
            <person name="Miller N."/>
            <person name="Blanchard M."/>
            <person name="Qurollo B."/>
            <person name="Goldman B.S."/>
            <person name="Cao Y."/>
            <person name="Askenazi M."/>
            <person name="Halling C."/>
            <person name="Mullin L."/>
            <person name="Houmiel K."/>
            <person name="Gordon J."/>
            <person name="Vaudin M."/>
            <person name="Iartchouk O."/>
            <person name="Epp A."/>
            <person name="Liu F."/>
            <person name="Wollam C."/>
            <person name="Allinger M."/>
            <person name="Doughty D."/>
            <person name="Scott C."/>
            <person name="Lappas C."/>
            <person name="Markelz B."/>
            <person name="Flanagan C."/>
            <person name="Crowell C."/>
            <person name="Gurson J."/>
            <person name="Lomo C."/>
            <person name="Sear C."/>
            <person name="Strub G."/>
            <person name="Cielo C."/>
            <person name="Slater S."/>
        </authorList>
    </citation>
    <scope>NUCLEOTIDE SEQUENCE [LARGE SCALE GENOMIC DNA]</scope>
    <source>
        <strain>C58 / ATCC 33970</strain>
    </source>
</reference>
<reference key="3">
    <citation type="journal article" date="2011" name="PLoS ONE">
        <title>A photolyase-like protein from Agrobacterium tumefaciens with an iron-sulfur cluster.</title>
        <authorList>
            <person name="Oberpichler I."/>
            <person name="Pierik A.J."/>
            <person name="Wesslowski J."/>
            <person name="Pokorny R."/>
            <person name="Rosen R."/>
            <person name="Vugman M."/>
            <person name="Zhang F."/>
            <person name="Neubauer O."/>
            <person name="Ron E.Z."/>
            <person name="Batschauer A."/>
            <person name="Lamparter T."/>
        </authorList>
    </citation>
    <scope>COFACTOR</scope>
    <scope>DISRUPTION PHENOTYPE</scope>
    <source>
        <strain>C58 / ATCC 33970</strain>
    </source>
</reference>
<reference key="4">
    <citation type="journal article" date="2013" name="Proc. Natl. Acad. Sci. U.S.A.">
        <title>Crystal structure of a prokaryotic (6-4) photolyase with an Fe-S cluster and a 6,7-dimethyl-8-ribityllumazine antenna chromophore.</title>
        <authorList>
            <person name="Zhang F."/>
            <person name="Scheerer P."/>
            <person name="Oberpichler I."/>
            <person name="Lamparter T."/>
            <person name="Krauss N."/>
        </authorList>
    </citation>
    <scope>X-RAY CRYSTALLOGRAPHY (1.45 ANGSTROMS) IN COMPLEX WITH FAD; 6,7-DIMETHYL-8-RIBITYLLUMAZINE AND IRON-SULFUR (4FE-4S)</scope>
    <scope>FUNCTION</scope>
    <scope>CATALYTIC ACTIVITY</scope>
    <scope>COFACTOR</scope>
    <source>
        <strain>C58 / ATCC 33970</strain>
    </source>
</reference>
<keyword id="KW-0002">3D-structure</keyword>
<keyword id="KW-0004">4Fe-4S</keyword>
<keyword id="KW-0157">Chromophore</keyword>
<keyword id="KW-0227">DNA damage</keyword>
<keyword id="KW-0234">DNA repair</keyword>
<keyword id="KW-0238">DNA-binding</keyword>
<keyword id="KW-0274">FAD</keyword>
<keyword id="KW-0285">Flavoprotein</keyword>
<keyword id="KW-0408">Iron</keyword>
<keyword id="KW-0411">Iron-sulfur</keyword>
<keyword id="KW-0456">Lyase</keyword>
<keyword id="KW-0479">Metal-binding</keyword>
<keyword id="KW-0547">Nucleotide-binding</keyword>
<keyword id="KW-1185">Reference proteome</keyword>
<name>PHRB_AGRFC</name>
<protein>
    <recommendedName>
        <fullName evidence="4">(6-4) photolyase</fullName>
        <ecNumber evidence="2">4.1.99.13</ecNumber>
    </recommendedName>
    <alternativeName>
        <fullName evidence="5">(6-4)DNA photolyase</fullName>
    </alternativeName>
    <alternativeName>
        <fullName evidence="3">DNA photolyase PhrB</fullName>
    </alternativeName>
    <alternativeName>
        <fullName>Photoreactivating enzyme PhrB</fullName>
    </alternativeName>
</protein>
<feature type="chain" id="PRO_0000431763" description="(6-4) photolyase">
    <location>
        <begin position="1"/>
        <end position="507"/>
    </location>
</feature>
<feature type="binding site" evidence="2 8">
    <location>
        <begin position="9"/>
        <end position="10"/>
    </location>
    <ligand>
        <name>6,7-dimethyl-8-(1-D-ribityl)lumazine</name>
        <dbReference type="ChEBI" id="CHEBI:58201"/>
    </ligand>
</feature>
<feature type="binding site" evidence="2 8">
    <location>
        <begin position="32"/>
        <end position="40"/>
    </location>
    <ligand>
        <name>6,7-dimethyl-8-(1-D-ribityl)lumazine</name>
        <dbReference type="ChEBI" id="CHEBI:58201"/>
    </ligand>
</feature>
<feature type="binding site" evidence="2 8">
    <location>
        <position position="105"/>
    </location>
    <ligand>
        <name>6,7-dimethyl-8-(1-D-ribityl)lumazine</name>
        <dbReference type="ChEBI" id="CHEBI:58201"/>
    </ligand>
</feature>
<feature type="binding site" evidence="2 8">
    <location>
        <begin position="265"/>
        <end position="269"/>
    </location>
    <ligand>
        <name>FAD</name>
        <dbReference type="ChEBI" id="CHEBI:57692"/>
    </ligand>
</feature>
<feature type="binding site" evidence="2 8">
    <location>
        <position position="273"/>
    </location>
    <ligand>
        <name>FAD</name>
        <dbReference type="ChEBI" id="CHEBI:57692"/>
    </ligand>
</feature>
<feature type="binding site" evidence="2 8">
    <location>
        <position position="350"/>
    </location>
    <ligand>
        <name>[4Fe-4S] cluster</name>
        <dbReference type="ChEBI" id="CHEBI:49883"/>
    </ligand>
</feature>
<feature type="binding site" evidence="2 8">
    <location>
        <begin position="363"/>
        <end position="366"/>
    </location>
    <ligand>
        <name>FAD</name>
        <dbReference type="ChEBI" id="CHEBI:57692"/>
    </ligand>
</feature>
<feature type="binding site" evidence="2 8">
    <location>
        <position position="397"/>
    </location>
    <ligand>
        <name>FAD</name>
        <dbReference type="ChEBI" id="CHEBI:57692"/>
    </ligand>
</feature>
<feature type="binding site" evidence="2 8">
    <location>
        <position position="406"/>
    </location>
    <ligand>
        <name>FAD</name>
        <dbReference type="ChEBI" id="CHEBI:57692"/>
    </ligand>
</feature>
<feature type="binding site" evidence="2 8">
    <location>
        <position position="438"/>
    </location>
    <ligand>
        <name>[4Fe-4S] cluster</name>
        <dbReference type="ChEBI" id="CHEBI:49883"/>
    </ligand>
</feature>
<feature type="binding site" evidence="2 8">
    <location>
        <position position="441"/>
    </location>
    <ligand>
        <name>[4Fe-4S] cluster</name>
        <dbReference type="ChEBI" id="CHEBI:49883"/>
    </ligand>
</feature>
<feature type="binding site" evidence="2 8">
    <location>
        <position position="454"/>
    </location>
    <ligand>
        <name>[4Fe-4S] cluster</name>
        <dbReference type="ChEBI" id="CHEBI:49883"/>
    </ligand>
</feature>
<feature type="strand" evidence="9">
    <location>
        <begin position="3"/>
        <end position="6"/>
    </location>
</feature>
<feature type="helix" evidence="9">
    <location>
        <begin position="17"/>
        <end position="19"/>
    </location>
</feature>
<feature type="turn" evidence="9">
    <location>
        <begin position="24"/>
        <end position="26"/>
    </location>
</feature>
<feature type="strand" evidence="9">
    <location>
        <begin position="28"/>
        <end position="32"/>
    </location>
</feature>
<feature type="helix" evidence="9">
    <location>
        <begin position="35"/>
        <end position="39"/>
    </location>
</feature>
<feature type="helix" evidence="9">
    <location>
        <begin position="45"/>
        <end position="64"/>
    </location>
</feature>
<feature type="strand" evidence="9">
    <location>
        <begin position="68"/>
        <end position="72"/>
    </location>
</feature>
<feature type="helix" evidence="9">
    <location>
        <begin position="83"/>
        <end position="94"/>
    </location>
</feature>
<feature type="strand" evidence="9">
    <location>
        <begin position="97"/>
        <end position="102"/>
    </location>
</feature>
<feature type="helix" evidence="9">
    <location>
        <begin position="107"/>
        <end position="114"/>
    </location>
</feature>
<feature type="helix" evidence="9">
    <location>
        <begin position="116"/>
        <end position="120"/>
    </location>
</feature>
<feature type="strand" evidence="9">
    <location>
        <begin position="122"/>
        <end position="127"/>
    </location>
</feature>
<feature type="strand" evidence="9">
    <location>
        <begin position="132"/>
        <end position="134"/>
    </location>
</feature>
<feature type="helix" evidence="9">
    <location>
        <begin position="136"/>
        <end position="143"/>
    </location>
</feature>
<feature type="helix" evidence="9">
    <location>
        <begin position="151"/>
        <end position="162"/>
    </location>
</feature>
<feature type="helix" evidence="9">
    <location>
        <begin position="172"/>
        <end position="174"/>
    </location>
</feature>
<feature type="helix" evidence="10">
    <location>
        <begin position="179"/>
        <end position="181"/>
    </location>
</feature>
<feature type="helix" evidence="9">
    <location>
        <begin position="202"/>
        <end position="214"/>
    </location>
</feature>
<feature type="strand" evidence="9">
    <location>
        <begin position="218"/>
        <end position="220"/>
    </location>
</feature>
<feature type="helix" evidence="9">
    <location>
        <begin position="231"/>
        <end position="244"/>
    </location>
</feature>
<feature type="helix" evidence="9">
    <location>
        <begin position="246"/>
        <end position="248"/>
    </location>
</feature>
<feature type="turn" evidence="9">
    <location>
        <begin position="249"/>
        <end position="254"/>
    </location>
</feature>
<feature type="strand" evidence="9">
    <location>
        <begin position="260"/>
        <end position="262"/>
    </location>
</feature>
<feature type="helix" evidence="9">
    <location>
        <begin position="269"/>
        <end position="272"/>
    </location>
</feature>
<feature type="turn" evidence="9">
    <location>
        <begin position="273"/>
        <end position="275"/>
    </location>
</feature>
<feature type="helix" evidence="9">
    <location>
        <begin position="279"/>
        <end position="291"/>
    </location>
</feature>
<feature type="helix" evidence="9">
    <location>
        <begin position="297"/>
        <end position="308"/>
    </location>
</feature>
<feature type="helix" evidence="9">
    <location>
        <begin position="310"/>
        <end position="321"/>
    </location>
</feature>
<feature type="helix" evidence="9">
    <location>
        <begin position="323"/>
        <end position="327"/>
    </location>
</feature>
<feature type="helix" evidence="9">
    <location>
        <begin position="340"/>
        <end position="343"/>
    </location>
</feature>
<feature type="helix" evidence="9">
    <location>
        <begin position="349"/>
        <end position="361"/>
    </location>
</feature>
<feature type="helix" evidence="9">
    <location>
        <begin position="366"/>
        <end position="371"/>
    </location>
</feature>
<feature type="helix" evidence="9">
    <location>
        <begin position="373"/>
        <end position="379"/>
    </location>
</feature>
<feature type="helix" evidence="9">
    <location>
        <begin position="384"/>
        <end position="394"/>
    </location>
</feature>
<feature type="helix" evidence="9">
    <location>
        <begin position="400"/>
        <end position="408"/>
    </location>
</feature>
<feature type="turn" evidence="9">
    <location>
        <begin position="409"/>
        <end position="412"/>
    </location>
</feature>
<feature type="turn" evidence="9">
    <location>
        <begin position="414"/>
        <end position="419"/>
    </location>
</feature>
<feature type="helix" evidence="9">
    <location>
        <begin position="428"/>
        <end position="434"/>
    </location>
</feature>
<feature type="helix" evidence="9">
    <location>
        <begin position="437"/>
        <end position="440"/>
    </location>
</feature>
<feature type="strand" evidence="9">
    <location>
        <begin position="442"/>
        <end position="444"/>
    </location>
</feature>
<feature type="strand" evidence="11">
    <location>
        <begin position="448"/>
        <end position="450"/>
    </location>
</feature>
<feature type="helix" evidence="9">
    <location>
        <begin position="455"/>
        <end position="466"/>
    </location>
</feature>
<feature type="helix" evidence="9">
    <location>
        <begin position="468"/>
        <end position="471"/>
    </location>
</feature>
<feature type="helix" evidence="9">
    <location>
        <begin position="475"/>
        <end position="477"/>
    </location>
</feature>
<feature type="helix" evidence="9">
    <location>
        <begin position="478"/>
        <end position="485"/>
    </location>
</feature>
<feature type="helix" evidence="9">
    <location>
        <begin position="489"/>
        <end position="507"/>
    </location>
</feature>
<evidence type="ECO:0000269" key="1">
    <source>
    </source>
</evidence>
<evidence type="ECO:0000269" key="2">
    <source>
    </source>
</evidence>
<evidence type="ECO:0000303" key="3">
    <source>
    </source>
</evidence>
<evidence type="ECO:0000303" key="4">
    <source>
    </source>
</evidence>
<evidence type="ECO:0000305" key="5"/>
<evidence type="ECO:0000305" key="6">
    <source>
    </source>
</evidence>
<evidence type="ECO:0000312" key="7">
    <source>
        <dbReference type="EMBL" id="AAK88685.1"/>
    </source>
</evidence>
<evidence type="ECO:0007744" key="8">
    <source>
        <dbReference type="PDB" id="4DJA"/>
    </source>
</evidence>
<evidence type="ECO:0007829" key="9">
    <source>
        <dbReference type="PDB" id="4DJA"/>
    </source>
</evidence>
<evidence type="ECO:0007829" key="10">
    <source>
        <dbReference type="PDB" id="5KCM"/>
    </source>
</evidence>
<evidence type="ECO:0007829" key="11">
    <source>
        <dbReference type="PDB" id="6DD6"/>
    </source>
</evidence>
<comment type="function">
    <text evidence="2">Photolyase involved in the repair of UV-induced (6-4) lesions in DNA. Catalyzes the photoreactivation of (6-4) pyrimidine-pyrimidone photoproducts by using blue-light energy. Can repair (6-4) photoproducts in ssDNA as well as in dsDNA.</text>
</comment>
<comment type="catalytic activity">
    <reaction evidence="2">
        <text>(6-4) photoproduct (in DNA) = 2 pyrimidine residues (in DNA).</text>
        <dbReference type="EC" id="4.1.99.13"/>
    </reaction>
</comment>
<comment type="cofactor">
    <cofactor evidence="1 2">
        <name>FAD</name>
        <dbReference type="ChEBI" id="CHEBI:57692"/>
    </cofactor>
    <text evidence="2">Binds 1 FAD per subunit.</text>
</comment>
<comment type="cofactor">
    <cofactor evidence="2">
        <name>6,7-dimethyl-8-(1-D-ribityl)lumazine</name>
        <dbReference type="ChEBI" id="CHEBI:58201"/>
    </cofactor>
    <text evidence="2">Binds 6,7-dimethyl-8-ribityllumazine (DMRL) as antenna chromophore.</text>
</comment>
<comment type="cofactor">
    <cofactor evidence="2 6">
        <name>[4Fe-4S] cluster</name>
        <dbReference type="ChEBI" id="CHEBI:49883"/>
    </cofactor>
    <text evidence="2">Binds 1 [4Fe-4S] cluster per subunit.</text>
</comment>
<comment type="disruption phenotype">
    <text evidence="1">Cells lacking this gene show a strongly attenuated photoreactivation after treatment with UV-B irradiation.</text>
</comment>
<comment type="similarity">
    <text evidence="6">Belongs to the iron-sulfur bacterial cryptochrome/photolyase (FeS-BCP) family.</text>
</comment>